<reference key="1">
    <citation type="journal article" date="1995" name="FEBS Lett.">
        <title>Cloning and sequencing of a human thioredoxin reductase.</title>
        <authorList>
            <person name="Gasdaska P.Y."/>
            <person name="Gasdaska J.R."/>
            <person name="Cochran S."/>
            <person name="Powis G."/>
        </authorList>
    </citation>
    <scope>NUCLEOTIDE SEQUENCE [MRNA] (ISOFORM 5)</scope>
    <scope>PROTEIN SEQUENCE OF 153-161; 307-315 AND 585-607</scope>
    <scope>VARIANT GLY-365</scope>
    <source>
        <tissue>Placenta</tissue>
    </source>
</reference>
<reference key="2">
    <citation type="journal article" date="1997" name="J. Biol. Chem.">
        <title>Cloning and characterization of a novel oxidoreductase KDRF from a human bone marrow-derived stromal cell line KM-102.</title>
        <authorList>
            <person name="Koishi R."/>
            <person name="Kawashima I."/>
            <person name="Yoshimura C."/>
            <person name="Sugawara M."/>
            <person name="Serizawa N."/>
        </authorList>
    </citation>
    <scope>NUCLEOTIDE SEQUENCE [MRNA] (ISOFORM 4)</scope>
    <scope>PROTEIN SEQUENCE OF 122-127 AND 147-151</scope>
    <scope>TISSUE SPECIFICITY</scope>
    <source>
        <tissue>Bone marrow stroma</tissue>
    </source>
</reference>
<reference key="3">
    <citation type="journal article" date="1998" name="Mol. Cell. Biol.">
        <title>Thioredoxin reductase mediates cell death effects of the combination of beta interferon and retinoic acid.</title>
        <authorList>
            <person name="Hofman E.R."/>
            <person name="Boyanapalli M."/>
            <person name="Lindner D.J."/>
            <person name="Weihua X."/>
            <person name="Hassel B.A."/>
            <person name="Jagus R."/>
            <person name="Gutierrez P.L."/>
            <person name="Kalvakolanu D.V."/>
        </authorList>
    </citation>
    <scope>NUCLEOTIDE SEQUENCE [MRNA] (ISOFORM 5)</scope>
    <scope>FUNCTION</scope>
    <scope>INDUCTION</scope>
    <source>
        <tissue>Mammary carcinoma</tissue>
    </source>
</reference>
<reference key="4">
    <citation type="journal article" date="2004" name="Free Radic. Biol. Med.">
        <title>Evidence for intriguingly complex transcription of human thioredoxin reductase 1.</title>
        <authorList>
            <person name="Rundloef A.-K."/>
            <person name="Janard M."/>
            <person name="Miranda-Vizuete A."/>
            <person name="Arner E.S."/>
        </authorList>
    </citation>
    <scope>NUCLEOTIDE SEQUENCE [MRNA] (ISOFORM 1)</scope>
    <scope>PARTIAL NUCLEOTIDE SEQUENCE [MRNA] (ISOFORMS 2; 3; 4 AND 5)</scope>
    <scope>VARIANT GLY-365</scope>
    <source>
        <tissue>Mammary gland</tissue>
        <tissue>Ovary</tissue>
        <tissue>Testis</tissue>
        <tissue>Thymus</tissue>
    </source>
</reference>
<reference key="5">
    <citation type="submission" date="1997-08" db="EMBL/GenBank/DDBJ databases">
        <title>Identification by ddPCR of thioredoxin reductase as a vitamin D regulated gene in human osteoblasts.</title>
        <authorList>
            <person name="Schuetze N."/>
            <person name="Bachthaler M."/>
            <person name="Lechner A."/>
            <person name="Koehrle J."/>
            <person name="Jakob F."/>
        </authorList>
    </citation>
    <scope>NUCLEOTIDE SEQUENCE [MRNA] (ISOFORM 5)</scope>
</reference>
<reference key="6">
    <citation type="submission" date="1999-11" db="EMBL/GenBank/DDBJ databases">
        <title>Cloning and sequencing of thioredoxin reductase gene from human brain.</title>
        <authorList>
            <person name="Xu L."/>
            <person name="Dai R."/>
            <person name="Xu J.Y."/>
        </authorList>
    </citation>
    <scope>NUCLEOTIDE SEQUENCE [MRNA] (ISOFORM 5)</scope>
    <source>
        <tissue>Brain</tissue>
    </source>
</reference>
<reference key="7">
    <citation type="journal article" date="2004" name="Nat. Genet.">
        <title>Complete sequencing and characterization of 21,243 full-length human cDNAs.</title>
        <authorList>
            <person name="Ota T."/>
            <person name="Suzuki Y."/>
            <person name="Nishikawa T."/>
            <person name="Otsuki T."/>
            <person name="Sugiyama T."/>
            <person name="Irie R."/>
            <person name="Wakamatsu A."/>
            <person name="Hayashi K."/>
            <person name="Sato H."/>
            <person name="Nagai K."/>
            <person name="Kimura K."/>
            <person name="Makita H."/>
            <person name="Sekine M."/>
            <person name="Obayashi M."/>
            <person name="Nishi T."/>
            <person name="Shibahara T."/>
            <person name="Tanaka T."/>
            <person name="Ishii S."/>
            <person name="Yamamoto J."/>
            <person name="Saito K."/>
            <person name="Kawai Y."/>
            <person name="Isono Y."/>
            <person name="Nakamura Y."/>
            <person name="Nagahari K."/>
            <person name="Murakami K."/>
            <person name="Yasuda T."/>
            <person name="Iwayanagi T."/>
            <person name="Wagatsuma M."/>
            <person name="Shiratori A."/>
            <person name="Sudo H."/>
            <person name="Hosoiri T."/>
            <person name="Kaku Y."/>
            <person name="Kodaira H."/>
            <person name="Kondo H."/>
            <person name="Sugawara M."/>
            <person name="Takahashi M."/>
            <person name="Kanda K."/>
            <person name="Yokoi T."/>
            <person name="Furuya T."/>
            <person name="Kikkawa E."/>
            <person name="Omura Y."/>
            <person name="Abe K."/>
            <person name="Kamihara K."/>
            <person name="Katsuta N."/>
            <person name="Sato K."/>
            <person name="Tanikawa M."/>
            <person name="Yamazaki M."/>
            <person name="Ninomiya K."/>
            <person name="Ishibashi T."/>
            <person name="Yamashita H."/>
            <person name="Murakawa K."/>
            <person name="Fujimori K."/>
            <person name="Tanai H."/>
            <person name="Kimata M."/>
            <person name="Watanabe M."/>
            <person name="Hiraoka S."/>
            <person name="Chiba Y."/>
            <person name="Ishida S."/>
            <person name="Ono Y."/>
            <person name="Takiguchi S."/>
            <person name="Watanabe S."/>
            <person name="Yosida M."/>
            <person name="Hotuta T."/>
            <person name="Kusano J."/>
            <person name="Kanehori K."/>
            <person name="Takahashi-Fujii A."/>
            <person name="Hara H."/>
            <person name="Tanase T.-O."/>
            <person name="Nomura Y."/>
            <person name="Togiya S."/>
            <person name="Komai F."/>
            <person name="Hara R."/>
            <person name="Takeuchi K."/>
            <person name="Arita M."/>
            <person name="Imose N."/>
            <person name="Musashino K."/>
            <person name="Yuuki H."/>
            <person name="Oshima A."/>
            <person name="Sasaki N."/>
            <person name="Aotsuka S."/>
            <person name="Yoshikawa Y."/>
            <person name="Matsunawa H."/>
            <person name="Ichihara T."/>
            <person name="Shiohata N."/>
            <person name="Sano S."/>
            <person name="Moriya S."/>
            <person name="Momiyama H."/>
            <person name="Satoh N."/>
            <person name="Takami S."/>
            <person name="Terashima Y."/>
            <person name="Suzuki O."/>
            <person name="Nakagawa S."/>
            <person name="Senoh A."/>
            <person name="Mizoguchi H."/>
            <person name="Goto Y."/>
            <person name="Shimizu F."/>
            <person name="Wakebe H."/>
            <person name="Hishigaki H."/>
            <person name="Watanabe T."/>
            <person name="Sugiyama A."/>
            <person name="Takemoto M."/>
            <person name="Kawakami B."/>
            <person name="Yamazaki M."/>
            <person name="Watanabe K."/>
            <person name="Kumagai A."/>
            <person name="Itakura S."/>
            <person name="Fukuzumi Y."/>
            <person name="Fujimori Y."/>
            <person name="Komiyama M."/>
            <person name="Tashiro H."/>
            <person name="Tanigami A."/>
            <person name="Fujiwara T."/>
            <person name="Ono T."/>
            <person name="Yamada K."/>
            <person name="Fujii Y."/>
            <person name="Ozaki K."/>
            <person name="Hirao M."/>
            <person name="Ohmori Y."/>
            <person name="Kawabata A."/>
            <person name="Hikiji T."/>
            <person name="Kobatake N."/>
            <person name="Inagaki H."/>
            <person name="Ikema Y."/>
            <person name="Okamoto S."/>
            <person name="Okitani R."/>
            <person name="Kawakami T."/>
            <person name="Noguchi S."/>
            <person name="Itoh T."/>
            <person name="Shigeta K."/>
            <person name="Senba T."/>
            <person name="Matsumura K."/>
            <person name="Nakajima Y."/>
            <person name="Mizuno T."/>
            <person name="Morinaga M."/>
            <person name="Sasaki M."/>
            <person name="Togashi T."/>
            <person name="Oyama M."/>
            <person name="Hata H."/>
            <person name="Watanabe M."/>
            <person name="Komatsu T."/>
            <person name="Mizushima-Sugano J."/>
            <person name="Satoh T."/>
            <person name="Shirai Y."/>
            <person name="Takahashi Y."/>
            <person name="Nakagawa K."/>
            <person name="Okumura K."/>
            <person name="Nagase T."/>
            <person name="Nomura N."/>
            <person name="Kikuchi H."/>
            <person name="Masuho Y."/>
            <person name="Yamashita R."/>
            <person name="Nakai K."/>
            <person name="Yada T."/>
            <person name="Nakamura Y."/>
            <person name="Ohara O."/>
            <person name="Isogai T."/>
            <person name="Sugano S."/>
        </authorList>
    </citation>
    <scope>NUCLEOTIDE SEQUENCE [LARGE SCALE MRNA] (ISOFORM 7)</scope>
    <source>
        <tissue>Astrocyte</tissue>
        <tissue>Thalamus</tissue>
        <tissue>Trachea</tissue>
    </source>
</reference>
<reference key="8">
    <citation type="submission" date="2004-06" db="EMBL/GenBank/DDBJ databases">
        <title>Cloning of human full open reading frames in Gateway(TM) system entry vector (pDONR201).</title>
        <authorList>
            <person name="Halleck A."/>
            <person name="Ebert L."/>
            <person name="Mkoundinya M."/>
            <person name="Schick M."/>
            <person name="Eisenstein S."/>
            <person name="Neubert P."/>
            <person name="Kstrang K."/>
            <person name="Schatten R."/>
            <person name="Shen B."/>
            <person name="Henze S."/>
            <person name="Mar W."/>
            <person name="Korn B."/>
            <person name="Zuo D."/>
            <person name="Hu Y."/>
            <person name="LaBaer J."/>
        </authorList>
    </citation>
    <scope>NUCLEOTIDE SEQUENCE [LARGE SCALE MRNA] (ISOFORM 5)</scope>
</reference>
<reference key="9">
    <citation type="submission" date="2004-10" db="EMBL/GenBank/DDBJ databases">
        <title>Cloning of human full-length CDSs in BD Creator(TM) system donor vector.</title>
        <authorList>
            <person name="Kalnine N."/>
            <person name="Chen X."/>
            <person name="Rolfs A."/>
            <person name="Halleck A."/>
            <person name="Hines L."/>
            <person name="Eisenstein S."/>
            <person name="Koundinya M."/>
            <person name="Raphael J."/>
            <person name="Moreira D."/>
            <person name="Kelley T."/>
            <person name="LaBaer J."/>
            <person name="Lin Y."/>
            <person name="Phelan M."/>
            <person name="Farmer A."/>
        </authorList>
    </citation>
    <scope>NUCLEOTIDE SEQUENCE [LARGE SCALE MRNA] (ISOFORM 5)</scope>
</reference>
<reference key="10">
    <citation type="submission" date="2005-08" db="EMBL/GenBank/DDBJ databases">
        <authorList>
            <consortium name="NIEHS SNPs program"/>
        </authorList>
    </citation>
    <scope>NUCLEOTIDE SEQUENCE [GENOMIC DNA]</scope>
</reference>
<reference key="11">
    <citation type="journal article" date="2006" name="Nature">
        <title>The finished DNA sequence of human chromosome 12.</title>
        <authorList>
            <person name="Scherer S.E."/>
            <person name="Muzny D.M."/>
            <person name="Buhay C.J."/>
            <person name="Chen R."/>
            <person name="Cree A."/>
            <person name="Ding Y."/>
            <person name="Dugan-Rocha S."/>
            <person name="Gill R."/>
            <person name="Gunaratne P."/>
            <person name="Harris R.A."/>
            <person name="Hawes A.C."/>
            <person name="Hernandez J."/>
            <person name="Hodgson A.V."/>
            <person name="Hume J."/>
            <person name="Jackson A."/>
            <person name="Khan Z.M."/>
            <person name="Kovar-Smith C."/>
            <person name="Lewis L.R."/>
            <person name="Lozado R.J."/>
            <person name="Metzker M.L."/>
            <person name="Milosavljevic A."/>
            <person name="Miner G.R."/>
            <person name="Montgomery K.T."/>
            <person name="Morgan M.B."/>
            <person name="Nazareth L.V."/>
            <person name="Scott G."/>
            <person name="Sodergren E."/>
            <person name="Song X.-Z."/>
            <person name="Steffen D."/>
            <person name="Lovering R.C."/>
            <person name="Wheeler D.A."/>
            <person name="Worley K.C."/>
            <person name="Yuan Y."/>
            <person name="Zhang Z."/>
            <person name="Adams C.Q."/>
            <person name="Ansari-Lari M.A."/>
            <person name="Ayele M."/>
            <person name="Brown M.J."/>
            <person name="Chen G."/>
            <person name="Chen Z."/>
            <person name="Clerc-Blankenburg K.P."/>
            <person name="Davis C."/>
            <person name="Delgado O."/>
            <person name="Dinh H.H."/>
            <person name="Draper H."/>
            <person name="Gonzalez-Garay M.L."/>
            <person name="Havlak P."/>
            <person name="Jackson L.R."/>
            <person name="Jacob L.S."/>
            <person name="Kelly S.H."/>
            <person name="Li L."/>
            <person name="Li Z."/>
            <person name="Liu J."/>
            <person name="Liu W."/>
            <person name="Lu J."/>
            <person name="Maheshwari M."/>
            <person name="Nguyen B.-V."/>
            <person name="Okwuonu G.O."/>
            <person name="Pasternak S."/>
            <person name="Perez L.M."/>
            <person name="Plopper F.J.H."/>
            <person name="Santibanez J."/>
            <person name="Shen H."/>
            <person name="Tabor P.E."/>
            <person name="Verduzco D."/>
            <person name="Waldron L."/>
            <person name="Wang Q."/>
            <person name="Williams G.A."/>
            <person name="Zhang J."/>
            <person name="Zhou J."/>
            <person name="Allen C.C."/>
            <person name="Amin A.G."/>
            <person name="Anyalebechi V."/>
            <person name="Bailey M."/>
            <person name="Barbaria J.A."/>
            <person name="Bimage K.E."/>
            <person name="Bryant N.P."/>
            <person name="Burch P.E."/>
            <person name="Burkett C.E."/>
            <person name="Burrell K.L."/>
            <person name="Calderon E."/>
            <person name="Cardenas V."/>
            <person name="Carter K."/>
            <person name="Casias K."/>
            <person name="Cavazos I."/>
            <person name="Cavazos S.R."/>
            <person name="Ceasar H."/>
            <person name="Chacko J."/>
            <person name="Chan S.N."/>
            <person name="Chavez D."/>
            <person name="Christopoulos C."/>
            <person name="Chu J."/>
            <person name="Cockrell R."/>
            <person name="Cox C.D."/>
            <person name="Dang M."/>
            <person name="Dathorne S.R."/>
            <person name="David R."/>
            <person name="Davis C.M."/>
            <person name="Davy-Carroll L."/>
            <person name="Deshazo D.R."/>
            <person name="Donlin J.E."/>
            <person name="D'Souza L."/>
            <person name="Eaves K.A."/>
            <person name="Egan A."/>
            <person name="Emery-Cohen A.J."/>
            <person name="Escotto M."/>
            <person name="Flagg N."/>
            <person name="Forbes L.D."/>
            <person name="Gabisi A.M."/>
            <person name="Garza M."/>
            <person name="Hamilton C."/>
            <person name="Henderson N."/>
            <person name="Hernandez O."/>
            <person name="Hines S."/>
            <person name="Hogues M.E."/>
            <person name="Huang M."/>
            <person name="Idlebird D.G."/>
            <person name="Johnson R."/>
            <person name="Jolivet A."/>
            <person name="Jones S."/>
            <person name="Kagan R."/>
            <person name="King L.M."/>
            <person name="Leal B."/>
            <person name="Lebow H."/>
            <person name="Lee S."/>
            <person name="LeVan J.M."/>
            <person name="Lewis L.C."/>
            <person name="London P."/>
            <person name="Lorensuhewa L.M."/>
            <person name="Loulseged H."/>
            <person name="Lovett D.A."/>
            <person name="Lucier A."/>
            <person name="Lucier R.L."/>
            <person name="Ma J."/>
            <person name="Madu R.C."/>
            <person name="Mapua P."/>
            <person name="Martindale A.D."/>
            <person name="Martinez E."/>
            <person name="Massey E."/>
            <person name="Mawhiney S."/>
            <person name="Meador M.G."/>
            <person name="Mendez S."/>
            <person name="Mercado C."/>
            <person name="Mercado I.C."/>
            <person name="Merritt C.E."/>
            <person name="Miner Z.L."/>
            <person name="Minja E."/>
            <person name="Mitchell T."/>
            <person name="Mohabbat F."/>
            <person name="Mohabbat K."/>
            <person name="Montgomery B."/>
            <person name="Moore N."/>
            <person name="Morris S."/>
            <person name="Munidasa M."/>
            <person name="Ngo R.N."/>
            <person name="Nguyen N.B."/>
            <person name="Nickerson E."/>
            <person name="Nwaokelemeh O.O."/>
            <person name="Nwokenkwo S."/>
            <person name="Obregon M."/>
            <person name="Oguh M."/>
            <person name="Oragunye N."/>
            <person name="Oviedo R.J."/>
            <person name="Parish B.J."/>
            <person name="Parker D.N."/>
            <person name="Parrish J."/>
            <person name="Parks K.L."/>
            <person name="Paul H.A."/>
            <person name="Payton B.A."/>
            <person name="Perez A."/>
            <person name="Perrin W."/>
            <person name="Pickens A."/>
            <person name="Primus E.L."/>
            <person name="Pu L.-L."/>
            <person name="Puazo M."/>
            <person name="Quiles M.M."/>
            <person name="Quiroz J.B."/>
            <person name="Rabata D."/>
            <person name="Reeves K."/>
            <person name="Ruiz S.J."/>
            <person name="Shao H."/>
            <person name="Sisson I."/>
            <person name="Sonaike T."/>
            <person name="Sorelle R.P."/>
            <person name="Sutton A.E."/>
            <person name="Svatek A.F."/>
            <person name="Svetz L.A."/>
            <person name="Tamerisa K.S."/>
            <person name="Taylor T.R."/>
            <person name="Teague B."/>
            <person name="Thomas N."/>
            <person name="Thorn R.D."/>
            <person name="Trejos Z.Y."/>
            <person name="Trevino B.K."/>
            <person name="Ukegbu O.N."/>
            <person name="Urban J.B."/>
            <person name="Vasquez L.I."/>
            <person name="Vera V.A."/>
            <person name="Villasana D.M."/>
            <person name="Wang L."/>
            <person name="Ward-Moore S."/>
            <person name="Warren J.T."/>
            <person name="Wei X."/>
            <person name="White F."/>
            <person name="Williamson A.L."/>
            <person name="Wleczyk R."/>
            <person name="Wooden H.S."/>
            <person name="Wooden S.H."/>
            <person name="Yen J."/>
            <person name="Yoon L."/>
            <person name="Yoon V."/>
            <person name="Zorrilla S.E."/>
            <person name="Nelson D."/>
            <person name="Kucherlapati R."/>
            <person name="Weinstock G."/>
            <person name="Gibbs R.A."/>
        </authorList>
    </citation>
    <scope>NUCLEOTIDE SEQUENCE [LARGE SCALE GENOMIC DNA]</scope>
</reference>
<reference key="12">
    <citation type="submission" date="2005-07" db="EMBL/GenBank/DDBJ databases">
        <authorList>
            <person name="Mural R.J."/>
            <person name="Istrail S."/>
            <person name="Sutton G.G."/>
            <person name="Florea L."/>
            <person name="Halpern A.L."/>
            <person name="Mobarry C.M."/>
            <person name="Lippert R."/>
            <person name="Walenz B."/>
            <person name="Shatkay H."/>
            <person name="Dew I."/>
            <person name="Miller J.R."/>
            <person name="Flanigan M.J."/>
            <person name="Edwards N.J."/>
            <person name="Bolanos R."/>
            <person name="Fasulo D."/>
            <person name="Halldorsson B.V."/>
            <person name="Hannenhalli S."/>
            <person name="Turner R."/>
            <person name="Yooseph S."/>
            <person name="Lu F."/>
            <person name="Nusskern D.R."/>
            <person name="Shue B.C."/>
            <person name="Zheng X.H."/>
            <person name="Zhong F."/>
            <person name="Delcher A.L."/>
            <person name="Huson D.H."/>
            <person name="Kravitz S.A."/>
            <person name="Mouchard L."/>
            <person name="Reinert K."/>
            <person name="Remington K.A."/>
            <person name="Clark A.G."/>
            <person name="Waterman M.S."/>
            <person name="Eichler E.E."/>
            <person name="Adams M.D."/>
            <person name="Hunkapiller M.W."/>
            <person name="Myers E.W."/>
            <person name="Venter J.C."/>
        </authorList>
    </citation>
    <scope>NUCLEOTIDE SEQUENCE [LARGE SCALE GENOMIC DNA]</scope>
    <scope>IDENTIFICATION</scope>
    <source>
        <tissue>Trachea</tissue>
    </source>
</reference>
<reference key="13">
    <citation type="journal article" date="2004" name="Genome Res.">
        <title>The status, quality, and expansion of the NIH full-length cDNA project: the Mammalian Gene Collection (MGC).</title>
        <authorList>
            <consortium name="The MGC Project Team"/>
        </authorList>
    </citation>
    <scope>NUCLEOTIDE SEQUENCE [LARGE SCALE MRNA] (ISOFORM 5)</scope>
    <source>
        <tissue>Lung</tissue>
    </source>
</reference>
<reference key="14">
    <citation type="journal article" date="1996" name="Proc. Natl. Acad. Sci. U.S.A.">
        <title>Selenocysteine, identified as the penultimate C-terminal residue in human T-cell thioredoxin reductase, corresponds to TGA in the human placental gene.</title>
        <authorList>
            <person name="Gladyshev V.N."/>
            <person name="Jeang K.-T."/>
            <person name="Stadtman T.C."/>
        </authorList>
    </citation>
    <scope>PROTEIN SEQUENCE OF 307-316; 449-456; 466-476 AND 638-649</scope>
    <scope>BLOCKAGE OF N-TERMINUS</scope>
    <scope>SELENOCYSTEINE AT SEC-648</scope>
    <scope>IDENTIFICATION BY MASS SPECTROMETRY</scope>
</reference>
<reference key="15">
    <citation type="journal article" date="1996" name="Proc. Natl. Acad. Sci. U.S.A.">
        <title>A new selenoprotein from human lung adenocarcinoma cells: purification, properties, and thioredoxin reductase activity.</title>
        <authorList>
            <person name="Tamura T."/>
            <person name="Stadtman T.C."/>
        </authorList>
    </citation>
    <scope>FUNCTION</scope>
    <scope>HOMODIMERIZATION</scope>
    <scope>CHARACTERIZATION</scope>
    <scope>PRESENCE OF SELENOCYSTEINE</scope>
    <scope>COFACTOR</scope>
    <scope>CATALYTIC ACTIVITY</scope>
</reference>
<reference key="16">
    <citation type="journal article" date="2000" name="J. Biol. Chem.">
        <title>Essential role of selenium in the catalytic activities of mammalian thioredoxin reductase revealed by characterization of recombinant enzymes with selenocysteine mutations.</title>
        <authorList>
            <person name="Zhong L."/>
            <person name="Holmgren A."/>
        </authorList>
    </citation>
    <scope>FUNCTION</scope>
    <scope>BIOPHYSICOCHEMICAL PROPERTIES</scope>
    <scope>CATALYTIC ACTIVITY</scope>
</reference>
<reference key="17">
    <citation type="journal article" date="2004" name="Biochemistry">
        <title>Alternative splicing involving the thioredoxin reductase module in mammals: a glutaredoxin-containing thioredoxin reductase 1.</title>
        <authorList>
            <person name="Su D."/>
            <person name="Gladyshev V.N."/>
        </authorList>
    </citation>
    <scope>ALTERNATIVE SPLICING (ISOFORMS 1; 2; 3; 4; 5 AND 6)</scope>
    <scope>DOMAIN</scope>
</reference>
<reference key="18">
    <citation type="journal article" date="2004" name="J. Biol. Chem.">
        <title>An alternative splicing variant of the selenoprotein thioredoxin reductase is a modulator of estrogen signaling.</title>
        <authorList>
            <person name="Damdimopoulos A.E."/>
            <person name="Miranda-Vizuete A."/>
            <person name="Treuter E."/>
            <person name="Gustafsson J.-A."/>
            <person name="Spyrou G."/>
        </authorList>
    </citation>
    <scope>FUNCTION</scope>
    <scope>INTERACTION WITH ESR1 AND ESR2</scope>
    <scope>SUBCELLULAR LOCATION</scope>
    <scope>TISSUE SPECIFICITY (ISOFORM 4)</scope>
</reference>
<reference key="19">
    <citation type="journal article" date="2005" name="Nat. Biotechnol.">
        <title>Immunoaffinity profiling of tyrosine phosphorylation in cancer cells.</title>
        <authorList>
            <person name="Rush J."/>
            <person name="Moritz A."/>
            <person name="Lee K.A."/>
            <person name="Guo A."/>
            <person name="Goss V.L."/>
            <person name="Spek E.J."/>
            <person name="Zhang H."/>
            <person name="Zha X.-M."/>
            <person name="Polakiewicz R.D."/>
            <person name="Comb M.J."/>
        </authorList>
    </citation>
    <scope>PHOSPHORYLATION [LARGE SCALE ANALYSIS] AT TYR-281</scope>
    <scope>IDENTIFICATION BY MASS SPECTROMETRY [LARGE SCALE ANALYSIS]</scope>
</reference>
<reference key="20">
    <citation type="journal article" date="2006" name="Proc. Natl. Acad. Sci. U.S.A.">
        <title>HERC5 is an IFN-induced HECT-type E3 protein ligase that mediates type I IFN-induced ISGylation of protein targets.</title>
        <authorList>
            <person name="Wong J.J."/>
            <person name="Pung Y.F."/>
            <person name="Sze N.S."/>
            <person name="Chin K.C."/>
        </authorList>
    </citation>
    <scope>INTERACTION WITH HERC5</scope>
    <scope>ISGYLATION</scope>
</reference>
<reference key="21">
    <citation type="journal article" date="2008" name="J. Biol. Chem.">
        <title>Induction of cell membrane protrusions by the N-terminal glutaredoxin domain of a rare splice variant of human thioredoxin reductase 1.</title>
        <authorList>
            <person name="Dammeyer P."/>
            <person name="Damdimopoulos A.E."/>
            <person name="Nordman T."/>
            <person name="Jimenez A."/>
            <person name="Miranda-Vizuete A."/>
            <person name="Arner E.S.J."/>
        </authorList>
    </citation>
    <scope>FUNCTION</scope>
    <scope>TISSUE SPECIFICITY</scope>
    <scope>INDUCTION (ISOFORM 1)</scope>
</reference>
<reference key="22">
    <citation type="journal article" date="2009" name="Anal. Chem.">
        <title>Lys-N and trypsin cover complementary parts of the phosphoproteome in a refined SCX-based approach.</title>
        <authorList>
            <person name="Gauci S."/>
            <person name="Helbig A.O."/>
            <person name="Slijper M."/>
            <person name="Krijgsveld J."/>
            <person name="Heck A.J."/>
            <person name="Mohammed S."/>
        </authorList>
    </citation>
    <scope>ACETYLATION [LARGE SCALE ANALYSIS] AT MET-1 (ISOFORM 5)</scope>
    <scope>IDENTIFICATION BY MASS SPECTROMETRY [LARGE SCALE ANALYSIS]</scope>
</reference>
<reference key="23">
    <citation type="journal article" date="2009" name="Sci. Signal.">
        <title>Quantitative phosphoproteomic analysis of T cell receptor signaling reveals system-wide modulation of protein-protein interactions.</title>
        <authorList>
            <person name="Mayya V."/>
            <person name="Lundgren D.H."/>
            <person name="Hwang S.-I."/>
            <person name="Rezaul K."/>
            <person name="Wu L."/>
            <person name="Eng J.K."/>
            <person name="Rodionov V."/>
            <person name="Han D.K."/>
        </authorList>
    </citation>
    <scope>IDENTIFICATION BY MASS SPECTROMETRY [LARGE SCALE ANALYSIS]</scope>
    <source>
        <tissue>Leukemic T-cell</tissue>
    </source>
</reference>
<reference key="24">
    <citation type="journal article" date="2011" name="BMC Syst. Biol.">
        <title>Initial characterization of the human central proteome.</title>
        <authorList>
            <person name="Burkard T.R."/>
            <person name="Planyavsky M."/>
            <person name="Kaupe I."/>
            <person name="Breitwieser F.P."/>
            <person name="Buerckstuemmer T."/>
            <person name="Bennett K.L."/>
            <person name="Superti-Furga G."/>
            <person name="Colinge J."/>
        </authorList>
    </citation>
    <scope>IDENTIFICATION BY MASS SPECTROMETRY [LARGE SCALE ANALYSIS]</scope>
</reference>
<reference key="25">
    <citation type="journal article" date="2012" name="Mol. Cell. Proteomics">
        <title>Comparative large-scale characterisation of plant vs. mammal proteins reveals similar and idiosyncratic N-alpha acetylation features.</title>
        <authorList>
            <person name="Bienvenut W.V."/>
            <person name="Sumpton D."/>
            <person name="Martinez A."/>
            <person name="Lilla S."/>
            <person name="Espagne C."/>
            <person name="Meinnel T."/>
            <person name="Giglione C."/>
        </authorList>
    </citation>
    <scope>ACETYLATION [LARGE SCALE ANALYSIS] AT MET-1 (ISOFORM 5)</scope>
    <scope>IDENTIFICATION BY MASS SPECTROMETRY [LARGE SCALE ANALYSIS]</scope>
</reference>
<reference evidence="35" key="26">
    <citation type="journal article" date="2007" name="J. Mol. Biol.">
        <title>The structure of human thioredoxin reductase 1 provides insights into C-terminal rearrangements during catalysis.</title>
        <authorList>
            <person name="Fritz-Wolf K."/>
            <person name="Urig S."/>
            <person name="Becker K."/>
        </authorList>
    </citation>
    <scope>X-RAY CRYSTALLOGRAPHY (2.8 ANGSTROMS) (ISOFORM 5) IN COMPLEX WITH FAD AND NADPH</scope>
    <scope>COFACTOR</scope>
    <scope>SUBUNIT</scope>
</reference>
<organism>
    <name type="scientific">Homo sapiens</name>
    <name type="common">Human</name>
    <dbReference type="NCBI Taxonomy" id="9606"/>
    <lineage>
        <taxon>Eukaryota</taxon>
        <taxon>Metazoa</taxon>
        <taxon>Chordata</taxon>
        <taxon>Craniata</taxon>
        <taxon>Vertebrata</taxon>
        <taxon>Euteleostomi</taxon>
        <taxon>Mammalia</taxon>
        <taxon>Eutheria</taxon>
        <taxon>Euarchontoglires</taxon>
        <taxon>Primates</taxon>
        <taxon>Haplorrhini</taxon>
        <taxon>Catarrhini</taxon>
        <taxon>Hominidae</taxon>
        <taxon>Homo</taxon>
    </lineage>
</organism>
<dbReference type="EC" id="1.8.1.9" evidence="14"/>
<dbReference type="EC" id="1.11.1.2" evidence="6"/>
<dbReference type="EMBL" id="X91247">
    <property type="protein sequence ID" value="CAA62629.1"/>
    <property type="status" value="ALT_SEQ"/>
    <property type="molecule type" value="mRNA"/>
</dbReference>
<dbReference type="EMBL" id="S79851">
    <property type="protein sequence ID" value="AAB35418.1"/>
    <property type="status" value="ALT_SEQ"/>
    <property type="molecule type" value="mRNA"/>
</dbReference>
<dbReference type="EMBL" id="D88687">
    <property type="protein sequence ID" value="BAA13674.1"/>
    <property type="status" value="ALT_SEQ"/>
    <property type="molecule type" value="mRNA"/>
</dbReference>
<dbReference type="EMBL" id="AF077367">
    <property type="protein sequence ID" value="AAC69621.1"/>
    <property type="status" value="ALT_SEQ"/>
    <property type="molecule type" value="mRNA"/>
</dbReference>
<dbReference type="EMBL" id="AY057105">
    <property type="protein sequence ID" value="AAL15432.1"/>
    <property type="molecule type" value="mRNA"/>
</dbReference>
<dbReference type="EMBL" id="AY344081">
    <property type="protein sequence ID" value="AAQ62461.1"/>
    <property type="molecule type" value="mRNA"/>
</dbReference>
<dbReference type="EMBL" id="AY344083">
    <property type="protein sequence ID" value="AAQ62462.1"/>
    <property type="molecule type" value="mRNA"/>
</dbReference>
<dbReference type="EMBL" id="AY344084">
    <property type="protein sequence ID" value="AAQ62463.1"/>
    <property type="molecule type" value="mRNA"/>
</dbReference>
<dbReference type="EMBL" id="AY344086">
    <property type="protein sequence ID" value="AAQ62464.1"/>
    <property type="molecule type" value="mRNA"/>
</dbReference>
<dbReference type="EMBL" id="AY344087">
    <property type="protein sequence ID" value="AAQ62465.1"/>
    <property type="molecule type" value="mRNA"/>
</dbReference>
<dbReference type="EMBL" id="AY344089">
    <property type="protein sequence ID" value="AAQ62466.1"/>
    <property type="molecule type" value="mRNA"/>
</dbReference>
<dbReference type="EMBL" id="AY344092">
    <property type="protein sequence ID" value="AAQ62467.1"/>
    <property type="molecule type" value="mRNA"/>
</dbReference>
<dbReference type="EMBL" id="AY344093">
    <property type="protein sequence ID" value="AAQ62468.1"/>
    <property type="molecule type" value="mRNA"/>
</dbReference>
<dbReference type="EMBL" id="AY344095">
    <property type="protein sequence ID" value="AAQ62469.1"/>
    <property type="molecule type" value="mRNA"/>
</dbReference>
<dbReference type="EMBL" id="AY344096">
    <property type="protein sequence ID" value="AAQ62470.1"/>
    <property type="molecule type" value="mRNA"/>
</dbReference>
<dbReference type="EMBL" id="AY344670">
    <property type="protein sequence ID" value="AAQ62471.1"/>
    <property type="molecule type" value="mRNA"/>
</dbReference>
<dbReference type="EMBL" id="AY344673">
    <property type="protein sequence ID" value="AAQ62472.1"/>
    <property type="molecule type" value="mRNA"/>
</dbReference>
<dbReference type="EMBL" id="AY344679">
    <property type="protein sequence ID" value="AAQ62473.1"/>
    <property type="molecule type" value="mRNA"/>
</dbReference>
<dbReference type="EMBL" id="AJ001050">
    <property type="protein sequence ID" value="CAA04503.1"/>
    <property type="status" value="ALT_SEQ"/>
    <property type="molecule type" value="mRNA"/>
</dbReference>
<dbReference type="EMBL" id="AF208018">
    <property type="protein sequence ID" value="AAF15900.1"/>
    <property type="status" value="ALT_SEQ"/>
    <property type="molecule type" value="mRNA"/>
</dbReference>
<dbReference type="EMBL" id="AK293322">
    <property type="protein sequence ID" value="BAH11490.1"/>
    <property type="status" value="ALT_SEQ"/>
    <property type="molecule type" value="mRNA"/>
</dbReference>
<dbReference type="EMBL" id="AK296495">
    <property type="protein sequence ID" value="BAH12374.1"/>
    <property type="status" value="ALT_SEQ"/>
    <property type="molecule type" value="mRNA"/>
</dbReference>
<dbReference type="EMBL" id="AK304241">
    <property type="protein sequence ID" value="BAH14140.1"/>
    <property type="status" value="ALT_SEQ"/>
    <property type="molecule type" value="mRNA"/>
</dbReference>
<dbReference type="EMBL" id="CR536506">
    <property type="protein sequence ID" value="CAG38744.1"/>
    <property type="status" value="ALT_SEQ"/>
    <property type="molecule type" value="mRNA"/>
</dbReference>
<dbReference type="EMBL" id="BT019640">
    <property type="protein sequence ID" value="AAV38446.1"/>
    <property type="status" value="ALT_SEQ"/>
    <property type="molecule type" value="mRNA"/>
</dbReference>
<dbReference type="EMBL" id="DQ157758">
    <property type="protein sequence ID" value="AAZ67916.1"/>
    <property type="status" value="ALT_SEQ"/>
    <property type="molecule type" value="Genomic_DNA"/>
</dbReference>
<dbReference type="EMBL" id="AC089983">
    <property type="status" value="NOT_ANNOTATED_CDS"/>
    <property type="molecule type" value="Genomic_DNA"/>
</dbReference>
<dbReference type="EMBL" id="AC090107">
    <property type="status" value="NOT_ANNOTATED_CDS"/>
    <property type="molecule type" value="Genomic_DNA"/>
</dbReference>
<dbReference type="EMBL" id="CH471054">
    <property type="protein sequence ID" value="EAW97745.1"/>
    <property type="status" value="ALT_SEQ"/>
    <property type="molecule type" value="Genomic_DNA"/>
</dbReference>
<dbReference type="EMBL" id="BC018122">
    <property type="protein sequence ID" value="AAH18122.2"/>
    <property type="molecule type" value="mRNA"/>
</dbReference>
<dbReference type="CCDS" id="CCDS53820.1">
    <molecule id="Q16881-1"/>
</dbReference>
<dbReference type="CCDS" id="CCDS53821.1">
    <molecule id="Q16881-4"/>
</dbReference>
<dbReference type="CCDS" id="CCDS53823.1">
    <molecule id="Q16881-5"/>
</dbReference>
<dbReference type="CCDS" id="CCDS58274.1">
    <molecule id="Q16881-7"/>
</dbReference>
<dbReference type="PIR" id="S66677">
    <property type="entry name" value="S66677"/>
</dbReference>
<dbReference type="RefSeq" id="NP_001087240.1">
    <molecule id="Q16881-1"/>
    <property type="nucleotide sequence ID" value="NM_001093771.3"/>
</dbReference>
<dbReference type="RefSeq" id="NP_001248374.1">
    <property type="nucleotide sequence ID" value="NM_001261445.1"/>
</dbReference>
<dbReference type="RefSeq" id="NP_001248375.1">
    <molecule id="Q16881-7"/>
    <property type="nucleotide sequence ID" value="NM_001261446.2"/>
</dbReference>
<dbReference type="RefSeq" id="NP_003321.3">
    <molecule id="Q16881-4"/>
    <property type="nucleotide sequence ID" value="NM_003330.3"/>
</dbReference>
<dbReference type="RefSeq" id="NP_877393.1">
    <molecule id="Q16881-5"/>
    <property type="nucleotide sequence ID" value="NM_182729.3"/>
</dbReference>
<dbReference type="RefSeq" id="NP_877419.1">
    <molecule id="Q16881-5"/>
    <property type="nucleotide sequence ID" value="NM_182742.3"/>
</dbReference>
<dbReference type="RefSeq" id="NP_877420.1">
    <molecule id="Q16881-5"/>
    <property type="nucleotide sequence ID" value="NM_182743.3"/>
</dbReference>
<dbReference type="PDB" id="2CFY">
    <property type="method" value="X-ray"/>
    <property type="resolution" value="2.70 A"/>
    <property type="chains" value="A/B/C/D/E/F=151-647"/>
</dbReference>
<dbReference type="PDB" id="2J3N">
    <property type="method" value="X-ray"/>
    <property type="resolution" value="2.80 A"/>
    <property type="chains" value="A/B/C/D/E/F=151-647"/>
</dbReference>
<dbReference type="PDB" id="2ZZ0">
    <property type="method" value="X-ray"/>
    <property type="resolution" value="2.80 A"/>
    <property type="chains" value="A/B/C/D=150-647"/>
</dbReference>
<dbReference type="PDB" id="2ZZB">
    <property type="method" value="X-ray"/>
    <property type="resolution" value="3.20 A"/>
    <property type="chains" value="A/B/C/D=150-647"/>
</dbReference>
<dbReference type="PDB" id="2ZZC">
    <property type="method" value="X-ray"/>
    <property type="resolution" value="2.60 A"/>
    <property type="chains" value="A/B/C/D=150-647"/>
</dbReference>
<dbReference type="PDB" id="3QFA">
    <property type="method" value="X-ray"/>
    <property type="resolution" value="2.20 A"/>
    <property type="chains" value="A/B=151-649"/>
</dbReference>
<dbReference type="PDB" id="3QFB">
    <property type="method" value="X-ray"/>
    <property type="resolution" value="2.60 A"/>
    <property type="chains" value="A/B=151-649"/>
</dbReference>
<dbReference type="PDB" id="7X1R">
    <property type="method" value="EM"/>
    <property type="resolution" value="3.90 A"/>
    <property type="chains" value="A/B=152-649"/>
</dbReference>
<dbReference type="PDBsum" id="2CFY"/>
<dbReference type="PDBsum" id="2J3N"/>
<dbReference type="PDBsum" id="2ZZ0"/>
<dbReference type="PDBsum" id="2ZZB"/>
<dbReference type="PDBsum" id="2ZZC"/>
<dbReference type="PDBsum" id="3QFA"/>
<dbReference type="PDBsum" id="3QFB"/>
<dbReference type="PDBsum" id="7X1R"/>
<dbReference type="EMDB" id="EMD-32947"/>
<dbReference type="SMR" id="Q16881"/>
<dbReference type="BioGRID" id="113147">
    <property type="interactions" value="112"/>
</dbReference>
<dbReference type="CORUM" id="Q16881"/>
<dbReference type="FunCoup" id="Q16881">
    <property type="interactions" value="2117"/>
</dbReference>
<dbReference type="IntAct" id="Q16881">
    <property type="interactions" value="21"/>
</dbReference>
<dbReference type="MINT" id="Q16881"/>
<dbReference type="STRING" id="9606.ENSP00000434516"/>
<dbReference type="BindingDB" id="Q16881"/>
<dbReference type="ChEMBL" id="CHEMBL1927"/>
<dbReference type="DrugBank" id="DB01169">
    <property type="generic name" value="Arsenic trioxide"/>
</dbReference>
<dbReference type="DrugBank" id="DB00126">
    <property type="generic name" value="Ascorbic acid"/>
</dbReference>
<dbReference type="DrugBank" id="DB03147">
    <property type="generic name" value="Flavin adenine dinucleotide"/>
</dbReference>
<dbReference type="DrugBank" id="DB04106">
    <property type="generic name" value="Fotemustine"/>
</dbReference>
<dbReference type="DrugBank" id="DB05428">
    <property type="generic name" value="Motexafin gadolinium"/>
</dbReference>
<dbReference type="DrugBank" id="DB02338">
    <property type="generic name" value="NADPH"/>
</dbReference>
<dbReference type="DrugBank" id="DB05448">
    <property type="generic name" value="PX-12"/>
</dbReference>
<dbReference type="DrugBank" id="DB11127">
    <property type="generic name" value="Selenious acid"/>
</dbReference>
<dbReference type="DrugBank" id="DB11135">
    <property type="generic name" value="Selenium"/>
</dbReference>
<dbReference type="DrugBank" id="DB03566">
    <property type="generic name" value="Spermidine"/>
</dbReference>
<dbReference type="DrugCentral" id="Q16881"/>
<dbReference type="GlyGen" id="Q16881">
    <property type="glycosylation" value="2 sites, 1 O-linked glycan (1 site)"/>
</dbReference>
<dbReference type="iPTMnet" id="Q16881"/>
<dbReference type="MetOSite" id="Q16881"/>
<dbReference type="PhosphoSitePlus" id="Q16881"/>
<dbReference type="SwissPalm" id="Q16881"/>
<dbReference type="BioMuta" id="TXNRD1"/>
<dbReference type="DMDM" id="172046253"/>
<dbReference type="REPRODUCTION-2DPAGE" id="IPI00554786"/>
<dbReference type="jPOST" id="Q16881"/>
<dbReference type="MassIVE" id="Q16881"/>
<dbReference type="PaxDb" id="9606-ENSP00000434516"/>
<dbReference type="PeptideAtlas" id="Q16881"/>
<dbReference type="ProteomicsDB" id="22254"/>
<dbReference type="ProteomicsDB" id="27407"/>
<dbReference type="ProteomicsDB" id="61119">
    <molecule id="Q16881-1"/>
</dbReference>
<dbReference type="ProteomicsDB" id="61120">
    <molecule id="Q16881-2"/>
</dbReference>
<dbReference type="ProteomicsDB" id="61121">
    <molecule id="Q16881-3"/>
</dbReference>
<dbReference type="ProteomicsDB" id="61122">
    <molecule id="Q16881-4"/>
</dbReference>
<dbReference type="ProteomicsDB" id="61123">
    <molecule id="Q16881-5"/>
</dbReference>
<dbReference type="ProteomicsDB" id="61124">
    <molecule id="Q16881-6"/>
</dbReference>
<dbReference type="Pumba" id="Q16881"/>
<dbReference type="Antibodypedia" id="3897">
    <property type="antibodies" value="467 antibodies from 42 providers"/>
</dbReference>
<dbReference type="DNASU" id="7296"/>
<dbReference type="Ensembl" id="ENST00000503506.6">
    <molecule id="Q16881-5"/>
    <property type="protein sequence ID" value="ENSP00000421934.2"/>
    <property type="gene ID" value="ENSG00000198431.18"/>
</dbReference>
<dbReference type="Ensembl" id="ENST00000524698.5">
    <molecule id="Q16881-5"/>
    <property type="protein sequence ID" value="ENSP00000433425.1"/>
    <property type="gene ID" value="ENSG00000198431.18"/>
</dbReference>
<dbReference type="Ensembl" id="ENST00000525566.6">
    <molecule id="Q16881-1"/>
    <property type="protein sequence ID" value="ENSP00000434516.1"/>
    <property type="gene ID" value="ENSG00000198431.18"/>
</dbReference>
<dbReference type="Ensembl" id="ENST00000526390.5">
    <molecule id="Q16881-2"/>
    <property type="protein sequence ID" value="ENSP00000435123.1"/>
    <property type="gene ID" value="ENSG00000198431.18"/>
</dbReference>
<dbReference type="Ensembl" id="ENST00000526691.5">
    <molecule id="Q16881-4"/>
    <property type="protein sequence ID" value="ENSP00000435929.1"/>
    <property type="gene ID" value="ENSG00000198431.18"/>
</dbReference>
<dbReference type="Ensembl" id="ENST00000526950.2">
    <molecule id="Q16881-6"/>
    <property type="protein sequence ID" value="ENSP00000432812.2"/>
    <property type="gene ID" value="ENSG00000198431.18"/>
</dbReference>
<dbReference type="Ensembl" id="ENST00000529546.5">
    <molecule id="Q16881-7"/>
    <property type="protein sequence ID" value="ENSP00000434919.1"/>
    <property type="gene ID" value="ENSG00000198431.18"/>
</dbReference>
<dbReference type="GeneID" id="7296"/>
<dbReference type="KEGG" id="hsa:7296"/>
<dbReference type="MANE-Select" id="ENST00000525566.6">
    <property type="protein sequence ID" value="ENSP00000434516.1"/>
    <property type="RefSeq nucleotide sequence ID" value="NM_001093771.3"/>
    <property type="RefSeq protein sequence ID" value="NP_001087240.1"/>
</dbReference>
<dbReference type="UCSC" id="uc010swp.4">
    <molecule id="Q16881-1"/>
    <property type="organism name" value="human"/>
</dbReference>
<dbReference type="AGR" id="HGNC:12437"/>
<dbReference type="CTD" id="7296"/>
<dbReference type="DisGeNET" id="7296"/>
<dbReference type="GeneCards" id="TXNRD1"/>
<dbReference type="HGNC" id="HGNC:12437">
    <property type="gene designation" value="TXNRD1"/>
</dbReference>
<dbReference type="HPA" id="ENSG00000198431">
    <property type="expression patterns" value="Low tissue specificity"/>
</dbReference>
<dbReference type="MalaCards" id="TXNRD1"/>
<dbReference type="MIM" id="601112">
    <property type="type" value="gene"/>
</dbReference>
<dbReference type="neXtProt" id="NX_Q16881"/>
<dbReference type="OpenTargets" id="ENSG00000198431"/>
<dbReference type="PharmGKB" id="PA37093"/>
<dbReference type="VEuPathDB" id="HostDB:ENSG00000198431"/>
<dbReference type="eggNOG" id="KOG1752">
    <property type="taxonomic scope" value="Eukaryota"/>
</dbReference>
<dbReference type="eggNOG" id="KOG4716">
    <property type="taxonomic scope" value="Eukaryota"/>
</dbReference>
<dbReference type="GeneTree" id="ENSGT00940000160180"/>
<dbReference type="HOGENOM" id="CLU_016755_2_4_1"/>
<dbReference type="InParanoid" id="Q16881"/>
<dbReference type="OrthoDB" id="5956163at2759"/>
<dbReference type="PAN-GO" id="Q16881">
    <property type="GO annotations" value="5 GO annotations based on evolutionary models"/>
</dbReference>
<dbReference type="PhylomeDB" id="Q16881"/>
<dbReference type="TreeFam" id="TF314782"/>
<dbReference type="BRENDA" id="1.8.1.9">
    <property type="organism ID" value="2681"/>
</dbReference>
<dbReference type="PathwayCommons" id="Q16881"/>
<dbReference type="Reactome" id="R-HSA-1989781">
    <property type="pathway name" value="PPARA activates gene expression"/>
</dbReference>
<dbReference type="Reactome" id="R-HSA-2408550">
    <property type="pathway name" value="Metabolism of ingested H2SeO4 and H2SeO3 into H2Se"/>
</dbReference>
<dbReference type="Reactome" id="R-HSA-3299685">
    <property type="pathway name" value="Detoxification of Reactive Oxygen Species"/>
</dbReference>
<dbReference type="Reactome" id="R-HSA-499943">
    <property type="pathway name" value="Interconversion of nucleotide di- and triphosphates"/>
</dbReference>
<dbReference type="Reactome" id="R-HSA-5263617">
    <property type="pathway name" value="Metabolism of ingested MeSeO2H into MeSeH"/>
</dbReference>
<dbReference type="Reactome" id="R-HSA-5336415">
    <property type="pathway name" value="Uptake and function of diphtheria toxin"/>
</dbReference>
<dbReference type="Reactome" id="R-HSA-5628897">
    <property type="pathway name" value="TP53 Regulates Metabolic Genes"/>
</dbReference>
<dbReference type="Reactome" id="R-HSA-9818027">
    <property type="pathway name" value="NFE2L2 regulating anti-oxidant/detoxification enzymes"/>
</dbReference>
<dbReference type="SignaLink" id="Q16881"/>
<dbReference type="BioGRID-ORCS" id="7296">
    <property type="hits" value="340 hits in 1183 CRISPR screens"/>
</dbReference>
<dbReference type="ChiTaRS" id="TXNRD1">
    <property type="organism name" value="human"/>
</dbReference>
<dbReference type="EvolutionaryTrace" id="Q16881"/>
<dbReference type="GeneWiki" id="TXNRD1"/>
<dbReference type="GenomeRNAi" id="7296"/>
<dbReference type="Pharos" id="Q16881">
    <property type="development level" value="Tclin"/>
</dbReference>
<dbReference type="PRO" id="PR:Q16881"/>
<dbReference type="Proteomes" id="UP000005640">
    <property type="component" value="Chromosome 12"/>
</dbReference>
<dbReference type="RNAct" id="Q16881">
    <property type="molecule type" value="protein"/>
</dbReference>
<dbReference type="Bgee" id="ENSG00000198431">
    <property type="expression patterns" value="Expressed in stromal cell of endometrium and 214 other cell types or tissues"/>
</dbReference>
<dbReference type="ExpressionAtlas" id="Q16881">
    <property type="expression patterns" value="baseline and differential"/>
</dbReference>
<dbReference type="GO" id="GO:0005737">
    <property type="term" value="C:cytoplasm"/>
    <property type="evidence" value="ECO:0000318"/>
    <property type="project" value="GO_Central"/>
</dbReference>
<dbReference type="GO" id="GO:0005829">
    <property type="term" value="C:cytosol"/>
    <property type="evidence" value="ECO:0000318"/>
    <property type="project" value="GO_Central"/>
</dbReference>
<dbReference type="GO" id="GO:0070062">
    <property type="term" value="C:extracellular exosome"/>
    <property type="evidence" value="ECO:0007005"/>
    <property type="project" value="UniProtKB"/>
</dbReference>
<dbReference type="GO" id="GO:0001650">
    <property type="term" value="C:fibrillar center"/>
    <property type="evidence" value="ECO:0000314"/>
    <property type="project" value="HPA"/>
</dbReference>
<dbReference type="GO" id="GO:0005739">
    <property type="term" value="C:mitochondrion"/>
    <property type="evidence" value="ECO:0000318"/>
    <property type="project" value="GO_Central"/>
</dbReference>
<dbReference type="GO" id="GO:0005654">
    <property type="term" value="C:nucleoplasm"/>
    <property type="evidence" value="ECO:0000314"/>
    <property type="project" value="HPA"/>
</dbReference>
<dbReference type="GO" id="GO:0071949">
    <property type="term" value="F:FAD binding"/>
    <property type="evidence" value="ECO:0000314"/>
    <property type="project" value="UniProtKB"/>
</dbReference>
<dbReference type="GO" id="GO:0042802">
    <property type="term" value="F:identical protein binding"/>
    <property type="evidence" value="ECO:0000314"/>
    <property type="project" value="UniProtKB"/>
</dbReference>
<dbReference type="GO" id="GO:0050137">
    <property type="term" value="F:NADPH peroxidase activity"/>
    <property type="evidence" value="ECO:0000314"/>
    <property type="project" value="UniProtKB"/>
</dbReference>
<dbReference type="GO" id="GO:0004791">
    <property type="term" value="F:thioredoxin-disulfide reductase (NADPH) activity"/>
    <property type="evidence" value="ECO:0000314"/>
    <property type="project" value="UniProtKB"/>
</dbReference>
<dbReference type="GO" id="GO:0008283">
    <property type="term" value="P:cell population proliferation"/>
    <property type="evidence" value="ECO:0007669"/>
    <property type="project" value="Ensembl"/>
</dbReference>
<dbReference type="GO" id="GO:0045454">
    <property type="term" value="P:cell redox homeostasis"/>
    <property type="evidence" value="ECO:0000318"/>
    <property type="project" value="GO_Central"/>
</dbReference>
<dbReference type="GO" id="GO:0001707">
    <property type="term" value="P:mesoderm formation"/>
    <property type="evidence" value="ECO:0007669"/>
    <property type="project" value="Ensembl"/>
</dbReference>
<dbReference type="GO" id="GO:0007165">
    <property type="term" value="P:signal transduction"/>
    <property type="evidence" value="ECO:0000303"/>
    <property type="project" value="ProtInc"/>
</dbReference>
<dbReference type="CDD" id="cd03419">
    <property type="entry name" value="GRX_GRXh_1_2_like"/>
    <property type="match status" value="1"/>
</dbReference>
<dbReference type="FunFam" id="3.50.50.60:FF:000190">
    <property type="entry name" value="Thioredoxin reductase"/>
    <property type="match status" value="1"/>
</dbReference>
<dbReference type="FunFam" id="3.30.390.30:FF:000004">
    <property type="entry name" value="Thioredoxin reductase 1, cytoplasmic"/>
    <property type="match status" value="1"/>
</dbReference>
<dbReference type="FunFam" id="3.40.30.10:FF:000271">
    <property type="entry name" value="Thioredoxin reductase 1, cytoplasmic"/>
    <property type="match status" value="1"/>
</dbReference>
<dbReference type="Gene3D" id="3.30.390.30">
    <property type="match status" value="1"/>
</dbReference>
<dbReference type="Gene3D" id="3.50.50.60">
    <property type="entry name" value="FAD/NAD(P)-binding domain"/>
    <property type="match status" value="2"/>
</dbReference>
<dbReference type="Gene3D" id="3.40.30.10">
    <property type="entry name" value="Glutaredoxin"/>
    <property type="match status" value="1"/>
</dbReference>
<dbReference type="InterPro" id="IPR036188">
    <property type="entry name" value="FAD/NAD-bd_sf"/>
</dbReference>
<dbReference type="InterPro" id="IPR023753">
    <property type="entry name" value="FAD/NAD-binding_dom"/>
</dbReference>
<dbReference type="InterPro" id="IPR016156">
    <property type="entry name" value="FAD/NAD-linked_Rdtase_dimer_sf"/>
</dbReference>
<dbReference type="InterPro" id="IPR002109">
    <property type="entry name" value="Glutaredoxin"/>
</dbReference>
<dbReference type="InterPro" id="IPR046952">
    <property type="entry name" value="GSHR/TRXR-like"/>
</dbReference>
<dbReference type="InterPro" id="IPR004099">
    <property type="entry name" value="Pyr_nucl-diS_OxRdtase_dimer"/>
</dbReference>
<dbReference type="InterPro" id="IPR012999">
    <property type="entry name" value="Pyr_OxRdtase_I_AS"/>
</dbReference>
<dbReference type="InterPro" id="IPR036249">
    <property type="entry name" value="Thioredoxin-like_sf"/>
</dbReference>
<dbReference type="InterPro" id="IPR006338">
    <property type="entry name" value="Thioredoxin/glutathione_Rdtase"/>
</dbReference>
<dbReference type="NCBIfam" id="TIGR01438">
    <property type="entry name" value="TGR"/>
    <property type="match status" value="1"/>
</dbReference>
<dbReference type="PANTHER" id="PTHR42737">
    <property type="entry name" value="GLUTATHIONE REDUCTASE"/>
    <property type="match status" value="1"/>
</dbReference>
<dbReference type="PANTHER" id="PTHR42737:SF8">
    <property type="entry name" value="THIOREDOXIN-DISULFIDE REDUCTASE"/>
    <property type="match status" value="1"/>
</dbReference>
<dbReference type="Pfam" id="PF00462">
    <property type="entry name" value="Glutaredoxin"/>
    <property type="match status" value="1"/>
</dbReference>
<dbReference type="Pfam" id="PF07992">
    <property type="entry name" value="Pyr_redox_2"/>
    <property type="match status" value="1"/>
</dbReference>
<dbReference type="Pfam" id="PF02852">
    <property type="entry name" value="Pyr_redox_dim"/>
    <property type="match status" value="1"/>
</dbReference>
<dbReference type="PRINTS" id="PR00368">
    <property type="entry name" value="FADPNR"/>
</dbReference>
<dbReference type="PRINTS" id="PR00411">
    <property type="entry name" value="PNDRDTASEI"/>
</dbReference>
<dbReference type="SUPFAM" id="SSF51905">
    <property type="entry name" value="FAD/NAD(P)-binding domain"/>
    <property type="match status" value="1"/>
</dbReference>
<dbReference type="SUPFAM" id="SSF55424">
    <property type="entry name" value="FAD/NAD-linked reductases, dimerisation (C-terminal) domain"/>
    <property type="match status" value="1"/>
</dbReference>
<dbReference type="SUPFAM" id="SSF52833">
    <property type="entry name" value="Thioredoxin-like"/>
    <property type="match status" value="1"/>
</dbReference>
<dbReference type="PROSITE" id="PS51354">
    <property type="entry name" value="GLUTAREDOXIN_2"/>
    <property type="match status" value="1"/>
</dbReference>
<dbReference type="PROSITE" id="PS00076">
    <property type="entry name" value="PYRIDINE_REDOX_1"/>
    <property type="match status" value="1"/>
</dbReference>
<name>TRXR1_HUMAN</name>
<gene>
    <name evidence="34" type="primary">TXNRD1</name>
    <name type="synonym">GRIM12</name>
    <name type="synonym">KDRF</name>
</gene>
<keyword id="KW-0002">3D-structure</keyword>
<keyword id="KW-0007">Acetylation</keyword>
<keyword id="KW-0025">Alternative splicing</keyword>
<keyword id="KW-0963">Cytoplasm</keyword>
<keyword id="KW-0903">Direct protein sequencing</keyword>
<keyword id="KW-1015">Disulfide bond</keyword>
<keyword id="KW-0249">Electron transport</keyword>
<keyword id="KW-0274">FAD</keyword>
<keyword id="KW-0285">Flavoprotein</keyword>
<keyword id="KW-0521">NADP</keyword>
<keyword id="KW-0539">Nucleus</keyword>
<keyword id="KW-0560">Oxidoreductase</keyword>
<keyword id="KW-0597">Phosphoprotein</keyword>
<keyword id="KW-1267">Proteomics identification</keyword>
<keyword id="KW-0676">Redox-active center</keyword>
<keyword id="KW-1185">Reference proteome</keyword>
<keyword id="KW-0712">Selenocysteine</keyword>
<keyword id="KW-0813">Transport</keyword>
<keyword id="KW-0832">Ubl conjugation</keyword>
<feature type="chain" id="PRO_0000030286" description="Thioredoxin reductase 1, cytoplasmic">
    <location>
        <begin position="1"/>
        <end position="649"/>
    </location>
</feature>
<feature type="domain" description="Glutaredoxin" evidence="4">
    <location>
        <begin position="56"/>
        <end position="156"/>
    </location>
</feature>
<feature type="region of interest" description="Disordered" evidence="5">
    <location>
        <begin position="1"/>
        <end position="49"/>
    </location>
</feature>
<feature type="region of interest" description="Required for interaction with ESR1 and ESR2" evidence="8">
    <location>
        <begin position="145"/>
        <end position="149"/>
    </location>
</feature>
<feature type="compositionally biased region" description="Basic and acidic residues" evidence="5">
    <location>
        <begin position="22"/>
        <end position="36"/>
    </location>
</feature>
<feature type="active site" description="Proton acceptor" evidence="1">
    <location>
        <position position="622"/>
    </location>
</feature>
<feature type="binding site" evidence="11 35">
    <location>
        <begin position="172"/>
        <end position="173"/>
    </location>
    <ligand>
        <name>FAD</name>
        <dbReference type="ChEBI" id="CHEBI:57692"/>
    </ligand>
</feature>
<feature type="binding site" evidence="11 35">
    <location>
        <begin position="192"/>
        <end position="193"/>
    </location>
    <ligand>
        <name>FAD</name>
        <dbReference type="ChEBI" id="CHEBI:57692"/>
    </ligand>
</feature>
<feature type="binding site" evidence="11 35">
    <location>
        <begin position="208"/>
        <end position="209"/>
    </location>
    <ligand>
        <name>FAD</name>
        <dbReference type="ChEBI" id="CHEBI:57692"/>
    </ligand>
</feature>
<feature type="binding site" evidence="11 35">
    <location>
        <begin position="213"/>
        <end position="217"/>
    </location>
    <ligand>
        <name>FAD</name>
        <dbReference type="ChEBI" id="CHEBI:57692"/>
    </ligand>
</feature>
<feature type="binding site" evidence="11 35">
    <location>
        <begin position="281"/>
        <end position="282"/>
    </location>
    <ligand>
        <name>FAD</name>
        <dbReference type="ChEBI" id="CHEBI:57692"/>
    </ligand>
</feature>
<feature type="binding site" evidence="35">
    <location>
        <position position="311"/>
    </location>
    <ligand>
        <name>FAD</name>
        <dbReference type="ChEBI" id="CHEBI:57692"/>
    </ligand>
</feature>
<feature type="binding site" evidence="11 35">
    <location>
        <position position="316"/>
    </location>
    <ligand>
        <name>NADP(+)</name>
        <dbReference type="ChEBI" id="CHEBI:58349"/>
    </ligand>
</feature>
<feature type="binding site" evidence="11 35">
    <location>
        <begin position="348"/>
        <end position="354"/>
    </location>
    <ligand>
        <name>NADP(+)</name>
        <dbReference type="ChEBI" id="CHEBI:58349"/>
    </ligand>
</feature>
<feature type="binding site" evidence="36 37 38">
    <location>
        <position position="350"/>
    </location>
    <ligand>
        <name>FAD</name>
        <dbReference type="ChEBI" id="CHEBI:57692"/>
    </ligand>
</feature>
<feature type="binding site" evidence="11 35">
    <location>
        <begin position="371"/>
        <end position="372"/>
    </location>
    <ligand>
        <name>NADP(+)</name>
        <dbReference type="ChEBI" id="CHEBI:58349"/>
    </ligand>
</feature>
<feature type="binding site" evidence="11 35">
    <location>
        <begin position="376"/>
        <end position="378"/>
    </location>
    <ligand>
        <name>NADP(+)</name>
        <dbReference type="ChEBI" id="CHEBI:58349"/>
    </ligand>
</feature>
<feature type="binding site" evidence="2">
    <location>
        <position position="376"/>
    </location>
    <ligand>
        <name>NADP(+)</name>
        <dbReference type="ChEBI" id="CHEBI:58349"/>
    </ligand>
</feature>
<feature type="binding site" evidence="11 35">
    <location>
        <begin position="442"/>
        <end position="443"/>
    </location>
    <ligand>
        <name>NADP(+)</name>
        <dbReference type="ChEBI" id="CHEBI:58349"/>
    </ligand>
</feature>
<feature type="binding site" evidence="11 35">
    <location>
        <position position="465"/>
    </location>
    <ligand>
        <name>NADP(+)</name>
        <dbReference type="ChEBI" id="CHEBI:58349"/>
    </ligand>
</feature>
<feature type="binding site" evidence="11 35">
    <location>
        <position position="484"/>
    </location>
    <ligand>
        <name>FAD</name>
        <dbReference type="ChEBI" id="CHEBI:57692"/>
    </ligand>
</feature>
<feature type="binding site" evidence="11 35">
    <location>
        <begin position="491"/>
        <end position="493"/>
    </location>
    <ligand>
        <name>FAD</name>
        <dbReference type="ChEBI" id="CHEBI:57692"/>
    </ligand>
</feature>
<feature type="binding site" evidence="35">
    <location>
        <position position="491"/>
    </location>
    <ligand>
        <name>NADP(+)</name>
        <dbReference type="ChEBI" id="CHEBI:58349"/>
    </ligand>
</feature>
<feature type="binding site" evidence="11 35">
    <location>
        <position position="622"/>
    </location>
    <ligand>
        <name>FAD</name>
        <dbReference type="ChEBI" id="CHEBI:57692"/>
    </ligand>
</feature>
<feature type="non-standard amino acid" description="Selenocysteine" evidence="15">
    <location>
        <position position="648"/>
    </location>
</feature>
<feature type="modified residue" description="N6-succinyllysine" evidence="3">
    <location>
        <position position="218"/>
    </location>
</feature>
<feature type="modified residue" description="Phosphotyrosine" evidence="39">
    <location>
        <position position="281"/>
    </location>
</feature>
<feature type="disulfide bond" description="Redox-active" evidence="1">
    <location>
        <begin position="209"/>
        <end position="214"/>
    </location>
</feature>
<feature type="cross-link" description="Cysteinyl-selenocysteine (Cys-Sec)" evidence="1">
    <location>
        <begin position="647"/>
        <end position="648"/>
    </location>
</feature>
<feature type="splice variant" id="VSP_053819" description="In isoform 7." evidence="18">
    <location>
        <begin position="1"/>
        <end position="188"/>
    </location>
</feature>
<feature type="splice variant" id="VSP_031558" description="In isoform 5." evidence="20 22 24 25 26 27 28">
    <location>
        <begin position="1"/>
        <end position="150"/>
    </location>
</feature>
<feature type="splice variant" id="VSP_031559" description="In isoform 6." evidence="29">
    <original>MGCAEGKAVAAAAPTELQTKGKNGDGRRRSAKDHHPGKTLPENPAGFTSTATADSRALLQAYIDGHSVVIFSRSTCTRCTEVKKLFKSLCVPYFVLELDQTEDGRALEGTLSELAAETDLPVVFVKQRKIGGHGPTLKA</original>
    <variation>MPVDDYWLCLPASCARPFVQTVRVVQSCPHCCWFPGVLPSVPEPLRMPAMLPTGSHSAVLPPSHCSTAPPSTSQEPSSSADPKLCLSPPTSDSRQERNVQFGLA</variation>
    <location>
        <begin position="1"/>
        <end position="139"/>
    </location>
</feature>
<feature type="splice variant" id="VSP_031560" description="In isoform 2." evidence="29">
    <location>
        <begin position="1"/>
        <end position="106"/>
    </location>
</feature>
<feature type="splice variant" id="VSP_031561" description="In isoform 4." evidence="23">
    <location>
        <begin position="1"/>
        <end position="98"/>
    </location>
</feature>
<feature type="splice variant" id="VSP_031562" description="In isoform 3." evidence="29">
    <location>
        <begin position="1"/>
        <end position="51"/>
    </location>
</feature>
<feature type="splice variant" id="VSP_031563" description="In isoform 3." evidence="29">
    <original>TADSRALLQAYIDGHSVVIFSRSTCTRCTEVKKLFKSLCVPYFVLELDQ</original>
    <variation>MQQVMLTCKGVNRGHAVPAGPGRKPRPRRSSRLLAGEKHLTRSALLLCH</variation>
    <location>
        <begin position="52"/>
        <end position="100"/>
    </location>
</feature>
<feature type="splice variant" id="VSP_031564" description="In isoform 4." evidence="23">
    <original>DQT</original>
    <variation>MSC</variation>
    <location>
        <begin position="99"/>
        <end position="101"/>
    </location>
</feature>
<feature type="splice variant" id="VSP_031565" description="In isoform 2." evidence="29">
    <original>LEGTLSELAAETDLPVVFVKQRKIGGHGPTLK</original>
    <variation>MLSRLVLNSWAQAIIRPRPPKVLGLQVTTFSE</variation>
    <location>
        <begin position="107"/>
        <end position="138"/>
    </location>
</feature>
<feature type="sequence variant" id="VAR_051776" description="In dbSNP:rs1127954." evidence="7 13">
    <original>D</original>
    <variation>G</variation>
    <location>
        <position position="365"/>
    </location>
</feature>
<feature type="sequence conflict" description="In Ref. 4; AAQ62473." evidence="29" ref="4">
    <original>G</original>
    <variation>S</variation>
    <location>
        <position position="153"/>
    </location>
</feature>
<feature type="sequence conflict" description="In Ref. 6; AAF15900." evidence="29" ref="6">
    <original>A</original>
    <variation>P</variation>
    <location>
        <position position="181"/>
    </location>
</feature>
<feature type="sequence conflict" description="In Ref. 6; AAF15900." evidence="29" ref="6">
    <original>V</original>
    <variation>G</variation>
    <location>
        <position position="194"/>
    </location>
</feature>
<feature type="sequence conflict" description="In Ref. 4; AAQ62469." evidence="29" ref="4">
    <original>G</original>
    <variation>E</variation>
    <location>
        <position position="200"/>
    </location>
</feature>
<feature type="sequence conflict" description="In Ref. 4; AAQ62463." evidence="29" ref="4">
    <original>R</original>
    <variation>K</variation>
    <location>
        <position position="202"/>
    </location>
</feature>
<feature type="sequence conflict" description="In Ref. 4; AAQ62463." evidence="29" ref="4">
    <original>I</original>
    <variation>N</variation>
    <location>
        <position position="215"/>
    </location>
</feature>
<feature type="sequence conflict" description="In Ref. 7; BAH11490." evidence="29" ref="7">
    <original>G</original>
    <variation>D</variation>
    <location>
        <position position="297"/>
    </location>
</feature>
<feature type="sequence conflict" description="In Ref. 1; AAB35418/CAA62629 and 4; AAL15432." evidence="29" ref="1 4">
    <original>R</original>
    <variation>S</variation>
    <location>
        <position position="306"/>
    </location>
</feature>
<feature type="sequence conflict" description="In Ref. 3; AAC69621." evidence="29" ref="3">
    <original>D</original>
    <variation>N</variation>
    <location>
        <position position="365"/>
    </location>
</feature>
<feature type="sequence conflict" description="In Ref. 7; BAH12374." evidence="29" ref="7">
    <original>V</original>
    <variation>A</variation>
    <location>
        <position position="437"/>
    </location>
</feature>
<feature type="sequence conflict" description="In Ref. 7; BAH12374." evidence="29" ref="7">
    <original>I</original>
    <variation>M</variation>
    <location>
        <position position="441"/>
    </location>
</feature>
<feature type="sequence conflict" description="In Ref. 8; CAG38744." evidence="29" ref="8">
    <original>K</original>
    <variation>R</variation>
    <location>
        <position position="449"/>
    </location>
</feature>
<feature type="sequence conflict" description="In Ref. 3; AAC69621." evidence="29" ref="3">
    <original>S</original>
    <variation>R</variation>
    <location>
        <position position="641"/>
    </location>
</feature>
<feature type="strand" evidence="44">
    <location>
        <begin position="162"/>
        <end position="168"/>
    </location>
</feature>
<feature type="helix" evidence="44">
    <location>
        <begin position="172"/>
        <end position="183"/>
    </location>
</feature>
<feature type="strand" evidence="44">
    <location>
        <begin position="188"/>
        <end position="191"/>
    </location>
</feature>
<feature type="helix" evidence="44">
    <location>
        <begin position="208"/>
        <end position="212"/>
    </location>
</feature>
<feature type="helix" evidence="44">
    <location>
        <begin position="214"/>
        <end position="233"/>
    </location>
</feature>
<feature type="turn" evidence="44">
    <location>
        <begin position="234"/>
        <end position="237"/>
    </location>
</feature>
<feature type="helix" evidence="44">
    <location>
        <begin position="248"/>
        <end position="272"/>
    </location>
</feature>
<feature type="strand" evidence="44">
    <location>
        <begin position="276"/>
        <end position="278"/>
    </location>
</feature>
<feature type="strand" evidence="44">
    <location>
        <begin position="280"/>
        <end position="286"/>
    </location>
</feature>
<feature type="strand" evidence="44">
    <location>
        <begin position="289"/>
        <end position="293"/>
    </location>
</feature>
<feature type="strand" evidence="43">
    <location>
        <begin position="295"/>
        <end position="297"/>
    </location>
</feature>
<feature type="strand" evidence="44">
    <location>
        <begin position="301"/>
        <end position="309"/>
    </location>
</feature>
<feature type="strand" evidence="44">
    <location>
        <begin position="313"/>
        <end position="315"/>
    </location>
</feature>
<feature type="helix" evidence="44">
    <location>
        <begin position="323"/>
        <end position="326"/>
    </location>
</feature>
<feature type="helix" evidence="44">
    <location>
        <begin position="330"/>
        <end position="333"/>
    </location>
</feature>
<feature type="strand" evidence="44">
    <location>
        <begin position="342"/>
        <end position="346"/>
    </location>
</feature>
<feature type="helix" evidence="44">
    <location>
        <begin position="350"/>
        <end position="361"/>
    </location>
</feature>
<feature type="strand" evidence="44">
    <location>
        <begin position="366"/>
        <end position="372"/>
    </location>
</feature>
<feature type="turn" evidence="43">
    <location>
        <begin position="374"/>
        <end position="377"/>
    </location>
</feature>
<feature type="helix" evidence="44">
    <location>
        <begin position="380"/>
        <end position="392"/>
    </location>
</feature>
<feature type="strand" evidence="44">
    <location>
        <begin position="396"/>
        <end position="410"/>
    </location>
</feature>
<feature type="strand" evidence="42">
    <location>
        <begin position="412"/>
        <end position="414"/>
    </location>
</feature>
<feature type="strand" evidence="44">
    <location>
        <begin position="416"/>
        <end position="427"/>
    </location>
</feature>
<feature type="strand" evidence="44">
    <location>
        <begin position="429"/>
        <end position="439"/>
    </location>
</feature>
<feature type="strand" evidence="44">
    <location>
        <begin position="443"/>
        <end position="446"/>
    </location>
</feature>
<feature type="strand" evidence="44">
    <location>
        <begin position="448"/>
        <end position="450"/>
    </location>
</feature>
<feature type="turn" evidence="44">
    <location>
        <begin position="453"/>
        <end position="456"/>
    </location>
</feature>
<feature type="turn" evidence="44">
    <location>
        <begin position="461"/>
        <end position="463"/>
    </location>
</feature>
<feature type="strand" evidence="44">
    <location>
        <begin position="479"/>
        <end position="481"/>
    </location>
</feature>
<feature type="helix" evidence="44">
    <location>
        <begin position="483"/>
        <end position="485"/>
    </location>
</feature>
<feature type="strand" evidence="44">
    <location>
        <begin position="486"/>
        <end position="489"/>
    </location>
</feature>
<feature type="helix" evidence="44">
    <location>
        <begin position="493"/>
        <end position="508"/>
    </location>
</feature>
<feature type="strand" evidence="44">
    <location>
        <begin position="522"/>
        <end position="524"/>
    </location>
</feature>
<feature type="strand" evidence="44">
    <location>
        <begin position="526"/>
        <end position="528"/>
    </location>
</feature>
<feature type="strand" evidence="44">
    <location>
        <begin position="530"/>
        <end position="534"/>
    </location>
</feature>
<feature type="helix" evidence="44">
    <location>
        <begin position="537"/>
        <end position="544"/>
    </location>
</feature>
<feature type="helix" evidence="44">
    <location>
        <begin position="546"/>
        <end position="548"/>
    </location>
</feature>
<feature type="strand" evidence="44">
    <location>
        <begin position="549"/>
        <end position="556"/>
    </location>
</feature>
<feature type="helix" evidence="44">
    <location>
        <begin position="559"/>
        <end position="562"/>
    </location>
</feature>
<feature type="turn" evidence="44">
    <location>
        <begin position="563"/>
        <end position="565"/>
    </location>
</feature>
<feature type="turn" evidence="44">
    <location>
        <begin position="568"/>
        <end position="570"/>
    </location>
</feature>
<feature type="strand" evidence="44">
    <location>
        <begin position="571"/>
        <end position="578"/>
    </location>
</feature>
<feature type="turn" evidence="44">
    <location>
        <begin position="579"/>
        <end position="582"/>
    </location>
</feature>
<feature type="strand" evidence="44">
    <location>
        <begin position="584"/>
        <end position="592"/>
    </location>
</feature>
<feature type="helix" evidence="44">
    <location>
        <begin position="595"/>
        <end position="607"/>
    </location>
</feature>
<feature type="helix" evidence="44">
    <location>
        <begin position="612"/>
        <end position="617"/>
    </location>
</feature>
<feature type="helix" evidence="44">
    <location>
        <begin position="625"/>
        <end position="631"/>
    </location>
</feature>
<feature type="turn" evidence="44">
    <location>
        <begin position="636"/>
        <end position="639"/>
    </location>
</feature>
<feature type="modified residue" description="N-acetylmethionine" evidence="40 41">
    <location sequence="Q16881-5">
        <position position="1"/>
    </location>
</feature>
<proteinExistence type="evidence at protein level"/>
<protein>
    <recommendedName>
        <fullName evidence="29">Thioredoxin reductase 1, cytoplasmic</fullName>
        <shortName>TR</shortName>
        <ecNumber evidence="14">1.8.1.9</ecNumber>
    </recommendedName>
    <alternativeName>
        <fullName>Gene associated with retinoic and interferon-induced mortality 12 protein</fullName>
        <shortName>GRIM-12</shortName>
        <shortName>Gene associated with retinoic and IFN-induced mortality 12 protein</shortName>
    </alternativeName>
    <alternativeName>
        <fullName>KM-102-derived reductase-like factor</fullName>
    </alternativeName>
    <alternativeName>
        <fullName evidence="30">Peroxidase TXNRD1</fullName>
        <ecNumber evidence="6">1.11.1.2</ecNumber>
    </alternativeName>
    <alternativeName>
        <fullName>Thioredoxin reductase TR1</fullName>
    </alternativeName>
</protein>
<comment type="function">
    <text evidence="6 14 32">Reduces disulfideprotein thioredoxin (Trx) to its dithiol-containing form (PubMed:8577704). Homodimeric flavoprotein involved in the regulation of cellular redox reactions, growth and differentiation. Contains a selenocysteine residue at the C-terminal active site that is essential for catalysis (Probable). Also has reductase activity on hydrogen peroxide (H2O2) (PubMed:10849437).</text>
</comment>
<comment type="function">
    <molecule>Isoform 1</molecule>
    <text evidence="12 14">Induces actin and tubulin polymerization, leading to formation of cell membrane protrusions.</text>
</comment>
<comment type="function">
    <molecule>Isoform 4</molecule>
    <text evidence="8">Enhances the transcriptional activity of estrogen receptors ESR1 and ESR2.</text>
</comment>
<comment type="function">
    <molecule>Isoform 5</molecule>
    <text evidence="8 17">Enhances the transcriptional activity of the estrogen receptor ESR2 only (PubMed:15199063). Mediates cell death induced by a combination of interferon-beta and retinoic acid (PubMed:9774665).</text>
</comment>
<comment type="catalytic activity">
    <reaction evidence="14">
        <text>[thioredoxin]-dithiol + NADP(+) = [thioredoxin]-disulfide + NADPH + H(+)</text>
        <dbReference type="Rhea" id="RHEA:20345"/>
        <dbReference type="Rhea" id="RHEA-COMP:10698"/>
        <dbReference type="Rhea" id="RHEA-COMP:10700"/>
        <dbReference type="ChEBI" id="CHEBI:15378"/>
        <dbReference type="ChEBI" id="CHEBI:29950"/>
        <dbReference type="ChEBI" id="CHEBI:50058"/>
        <dbReference type="ChEBI" id="CHEBI:57783"/>
        <dbReference type="ChEBI" id="CHEBI:58349"/>
        <dbReference type="EC" id="1.8.1.9"/>
    </reaction>
    <physiologicalReaction direction="right-to-left" evidence="33">
        <dbReference type="Rhea" id="RHEA:20347"/>
    </physiologicalReaction>
</comment>
<comment type="catalytic activity">
    <reaction evidence="6">
        <text>H2O2 + NADPH + H(+) = NADP(+) + 2 H2O</text>
        <dbReference type="Rhea" id="RHEA:15173"/>
        <dbReference type="ChEBI" id="CHEBI:15377"/>
        <dbReference type="ChEBI" id="CHEBI:15378"/>
        <dbReference type="ChEBI" id="CHEBI:16240"/>
        <dbReference type="ChEBI" id="CHEBI:57783"/>
        <dbReference type="ChEBI" id="CHEBI:58349"/>
        <dbReference type="EC" id="1.11.1.2"/>
    </reaction>
    <physiologicalReaction direction="left-to-right" evidence="30">
        <dbReference type="Rhea" id="RHEA:15174"/>
    </physiologicalReaction>
</comment>
<comment type="cofactor">
    <cofactor>
        <name>FAD</name>
        <dbReference type="ChEBI" id="CHEBI:57692"/>
    </cofactor>
    <text evidence="11 14">Binds 1 FAD per subunit.</text>
</comment>
<comment type="biophysicochemical properties">
    <kinetics>
        <KM evidence="6">2.5 mM for H202</KM>
        <text evidence="6">kcat is 100 min(-1) with H2O2 as substrate.</text>
    </kinetics>
</comment>
<comment type="subunit">
    <text evidence="10 11 14">Homodimer (PubMed:17512005, PubMed:8577704). Interacts with HERC5.</text>
</comment>
<comment type="subunit">
    <molecule>Isoform 4</molecule>
    <text evidence="10">Interacts with ESR1 and ESR2.</text>
</comment>
<comment type="interaction">
    <interactant intactId="EBI-716617">
        <id>Q16881</id>
    </interactant>
    <interactant intactId="EBI-603614">
        <id>Q03135</id>
        <label>CAV1</label>
    </interactant>
    <organismsDiffer>false</organismsDiffer>
    <experiments>4</experiments>
</comment>
<comment type="interaction">
    <interactant intactId="EBI-9080335">
        <id>Q16881-4</id>
    </interactant>
    <interactant intactId="EBI-78473">
        <id>P03372</id>
        <label>ESR1</label>
    </interactant>
    <organismsDiffer>false</organismsDiffer>
    <experiments>4</experiments>
</comment>
<comment type="interaction">
    <interactant intactId="EBI-9080335">
        <id>Q16881-4</id>
    </interactant>
    <interactant intactId="EBI-78505">
        <id>Q92731</id>
        <label>ESR2</label>
    </interactant>
    <organismsDiffer>false</organismsDiffer>
    <experiments>3</experiments>
</comment>
<comment type="subcellular location">
    <molecule>Isoform 1</molecule>
    <subcellularLocation>
        <location evidence="12">Cytoplasm</location>
    </subcellularLocation>
</comment>
<comment type="subcellular location">
    <molecule>Isoform 4</molecule>
    <subcellularLocation>
        <location evidence="8">Cytoplasm</location>
    </subcellularLocation>
    <subcellularLocation>
        <location evidence="8">Nucleus</location>
    </subcellularLocation>
</comment>
<comment type="subcellular location">
    <molecule>Isoform 5</molecule>
    <subcellularLocation>
        <location evidence="8">Cytoplasm</location>
    </subcellularLocation>
</comment>
<comment type="alternative products">
    <event type="alternative splicing"/>
    <isoform>
        <id>Q16881-1</id>
        <name>1</name>
        <name>V</name>
        <name evidence="21">TXNRD1_v3</name>
        <sequence type="displayed"/>
    </isoform>
    <isoform>
        <id>Q16881-2</id>
        <name>2</name>
        <name>II</name>
        <name>TXNRD1_v4</name>
        <sequence type="described" ref="VSP_031560 VSP_031565"/>
    </isoform>
    <isoform>
        <id>Q16881-3</id>
        <name>3</name>
        <name>III</name>
        <name>TXNRD1_v5</name>
        <sequence type="described" ref="VSP_031562 VSP_031563"/>
    </isoform>
    <isoform>
        <id>Q16881-4</id>
        <name>4</name>
        <name>IV</name>
        <name>TXNRD1_v2</name>
        <name evidence="19">TrxR1b</name>
        <sequence type="described" ref="VSP_031561 VSP_031564"/>
    </isoform>
    <isoform>
        <id>Q16881-5</id>
        <name>5</name>
        <name>I</name>
        <name>TXNRD1_v1</name>
        <name evidence="19">TrxR1a</name>
        <sequence type="described" ref="VSP_031558"/>
    </isoform>
    <isoform>
        <id>Q16881-6</id>
        <name>6</name>
        <name>VI</name>
        <sequence type="described" ref="VSP_031559"/>
    </isoform>
    <isoform>
        <id>Q16881-7</id>
        <name>7</name>
        <sequence type="described" ref="VSP_053819"/>
    </isoform>
</comment>
<comment type="tissue specificity">
    <molecule>Isoform 1</molecule>
    <text evidence="12">Expressed predominantly in Leydig cells (at protein level). Also expressed in ovary, spleen, heart, liver, kidney and pancreas and in a number of cancer cell lines.</text>
</comment>
<comment type="tissue specificity">
    <molecule>Isoform 4</molecule>
    <text evidence="16">Widely expressed with highest levels in kidney, testis, uterus, ovary, prostate, placenta and fetal liver.</text>
</comment>
<comment type="induction">
    <molecule>Isoform 1</molecule>
    <text evidence="12">Induced by estradiol or testosterone in HeLa cells.</text>
</comment>
<comment type="induction">
    <molecule>Isoform 5</molecule>
    <text evidence="17">Induced by a combination of interferon-beta and retinoic acid (at protein level).</text>
</comment>
<comment type="domain">
    <molecule>Isoform 1</molecule>
    <text evidence="9">The N-terminal glutaredoxin domain does not contain the C-P-Y-C redox-active motif normally found in glutaredoxins and has been found to be inactive in classical glutaredoxin assays.</text>
</comment>
<comment type="PTM">
    <molecule>Isoform 5</molecule>
    <text>The N-terminus is blocked.</text>
</comment>
<comment type="PTM">
    <text evidence="31">ISGylated.</text>
</comment>
<comment type="miscellaneous">
    <text evidence="2">The thioredoxin reductase active site is a redox-active disulfide bond. The selenocysteine residue is also essential for catalytic activity.</text>
</comment>
<comment type="miscellaneous">
    <molecule>Isoform 1</molecule>
    <text evidence="12">Minor isoform.</text>
</comment>
<comment type="miscellaneous">
    <molecule>Isoform 5</molecule>
    <text evidence="29">Major isoform. The N-terminus of the sequence is processed into a mature form that lacks residues Met-151 and Asn-152 at the N-terminus.</text>
</comment>
<comment type="similarity">
    <text evidence="29">Belongs to the class-I pyridine nucleotide-disulfide oxidoreductase family.</text>
</comment>
<comment type="sequence caution" evidence="29">
    <conflict type="erroneous termination">
        <sequence resource="EMBL-CDS" id="AAB35418"/>
    </conflict>
    <text>Truncated C-terminus.</text>
</comment>
<comment type="sequence caution" evidence="29">
    <conflict type="erroneous termination">
        <sequence resource="EMBL-CDS" id="AAC69621"/>
    </conflict>
    <text>Truncated C-terminus.</text>
</comment>
<comment type="sequence caution" evidence="29">
    <conflict type="erroneous termination">
        <sequence resource="EMBL-CDS" id="AAF15900"/>
    </conflict>
    <text>Truncated C-terminus.</text>
</comment>
<comment type="sequence caution" evidence="29">
    <conflict type="erroneous termination">
        <sequence resource="EMBL-CDS" id="AAV38446"/>
    </conflict>
    <text>Truncated C-terminus.</text>
</comment>
<comment type="sequence caution" evidence="29">
    <conflict type="erroneous termination">
        <sequence resource="EMBL-CDS" id="AAZ67916"/>
    </conflict>
    <text>Truncated C-terminus.</text>
</comment>
<comment type="sequence caution" evidence="29">
    <conflict type="erroneous termination">
        <sequence resource="EMBL-CDS" id="BAA13674"/>
    </conflict>
    <text>Truncated C-terminus.</text>
</comment>
<comment type="sequence caution" evidence="29">
    <conflict type="erroneous termination">
        <sequence resource="EMBL-CDS" id="BAH11490"/>
    </conflict>
    <text>Truncated C-terminus.</text>
</comment>
<comment type="sequence caution" evidence="29">
    <conflict type="erroneous termination">
        <sequence resource="EMBL-CDS" id="BAH12374"/>
    </conflict>
    <text>Truncated C-terminus.</text>
</comment>
<comment type="sequence caution" evidence="29">
    <conflict type="erroneous termination">
        <sequence resource="EMBL-CDS" id="BAH14140"/>
    </conflict>
    <text>Truncated C-terminus.</text>
</comment>
<comment type="sequence caution" evidence="29">
    <conflict type="erroneous termination">
        <sequence resource="EMBL-CDS" id="CAA04503"/>
    </conflict>
    <text>Truncated C-terminus.</text>
</comment>
<comment type="sequence caution" evidence="29">
    <conflict type="erroneous termination">
        <sequence resource="EMBL-CDS" id="CAA62629"/>
    </conflict>
    <text>Truncated C-terminus.</text>
</comment>
<comment type="sequence caution" evidence="29">
    <conflict type="erroneous termination">
        <sequence resource="EMBL-CDS" id="CAG38744"/>
    </conflict>
    <text>Truncated C-terminus.</text>
</comment>
<comment type="sequence caution" evidence="29">
    <conflict type="erroneous termination">
        <sequence resource="EMBL-CDS" id="EAW97745"/>
    </conflict>
    <text>Truncated C-terminus.</text>
</comment>
<sequence>MGCAEGKAVAAAAPTELQTKGKNGDGRRRSAKDHHPGKTLPENPAGFTSTATADSRALLQAYIDGHSVVIFSRSTCTRCTEVKKLFKSLCVPYFVLELDQTEDGRALEGTLSELAAETDLPVVFVKQRKIGGHGPTLKAYQEGRLQKLLKMNGPEDLPKSYDYDLIIIGGGSGGLAAAKEAAQYGKKVMVLDFVTPTPLGTRWGLGGTCVNVGCIPKKLMHQAALLGQALQDSRNYGWKVEETVKHDWDRMIEAVQNHIGSLNWGYRVALREKKVVYENAYGQFIGPHRIKATNNKGKEKIYSAERFLIATGERPRYLGIPGDKEYCISSDDLFSLPYCPGKTLVVGASYVALECAGFLAGIGLDVTVMVRSILLRGFDQDMANKIGEHMEEHGIKFIRQFVPIKVEQIEAGTPGRLRVVAQSTNSEEIIEGEYNTVMLAIGRDACTRKIGLETVGVKINEKTGKIPVTDEEQTNVPYIYAIGDILEDKVELTPVAIQAGRLLAQRLYAGSTVKCDYENVPTTVFTPLEYGACGLSEEKAVEKFGEENIEVYHSYFWPLEWTIPSRDNNKCYAKIICNTKDNERVVGFHVLGPNAGEVTQGFAAALKCGLTKKQLDSTIGIHPVCAEVFTTLSVTKRSGASILQAGCUG</sequence>
<evidence type="ECO:0000250" key="1"/>
<evidence type="ECO:0000250" key="2">
    <source>
        <dbReference type="UniProtKB" id="O89049"/>
    </source>
</evidence>
<evidence type="ECO:0000250" key="3">
    <source>
        <dbReference type="UniProtKB" id="Q9JMH6"/>
    </source>
</evidence>
<evidence type="ECO:0000255" key="4">
    <source>
        <dbReference type="PROSITE-ProRule" id="PRU00686"/>
    </source>
</evidence>
<evidence type="ECO:0000256" key="5">
    <source>
        <dbReference type="SAM" id="MobiDB-lite"/>
    </source>
</evidence>
<evidence type="ECO:0000269" key="6">
    <source>
    </source>
</evidence>
<evidence type="ECO:0000269" key="7">
    <source>
    </source>
</evidence>
<evidence type="ECO:0000269" key="8">
    <source>
    </source>
</evidence>
<evidence type="ECO:0000269" key="9">
    <source>
    </source>
</evidence>
<evidence type="ECO:0000269" key="10">
    <source>
    </source>
</evidence>
<evidence type="ECO:0000269" key="11">
    <source>
    </source>
</evidence>
<evidence type="ECO:0000269" key="12">
    <source>
    </source>
</evidence>
<evidence type="ECO:0000269" key="13">
    <source>
    </source>
</evidence>
<evidence type="ECO:0000269" key="14">
    <source>
    </source>
</evidence>
<evidence type="ECO:0000269" key="15">
    <source>
    </source>
</evidence>
<evidence type="ECO:0000269" key="16">
    <source>
    </source>
</evidence>
<evidence type="ECO:0000269" key="17">
    <source>
    </source>
</evidence>
<evidence type="ECO:0000303" key="18">
    <source>
    </source>
</evidence>
<evidence type="ECO:0000303" key="19">
    <source>
    </source>
</evidence>
<evidence type="ECO:0000303" key="20">
    <source>
    </source>
</evidence>
<evidence type="ECO:0000303" key="21">
    <source>
    </source>
</evidence>
<evidence type="ECO:0000303" key="22">
    <source>
    </source>
</evidence>
<evidence type="ECO:0000303" key="23">
    <source>
    </source>
</evidence>
<evidence type="ECO:0000303" key="24">
    <source>
    </source>
</evidence>
<evidence type="ECO:0000303" key="25">
    <source ref="5"/>
</evidence>
<evidence type="ECO:0000303" key="26">
    <source ref="6"/>
</evidence>
<evidence type="ECO:0000303" key="27">
    <source ref="8"/>
</evidence>
<evidence type="ECO:0000303" key="28">
    <source ref="9"/>
</evidence>
<evidence type="ECO:0000305" key="29"/>
<evidence type="ECO:0000305" key="30">
    <source>
    </source>
</evidence>
<evidence type="ECO:0000305" key="31">
    <source>
    </source>
</evidence>
<evidence type="ECO:0000305" key="32">
    <source>
    </source>
</evidence>
<evidence type="ECO:0000305" key="33">
    <source>
    </source>
</evidence>
<evidence type="ECO:0000312" key="34">
    <source>
        <dbReference type="HGNC" id="HGNC:12437"/>
    </source>
</evidence>
<evidence type="ECO:0007744" key="35">
    <source>
        <dbReference type="PDB" id="2J3N"/>
    </source>
</evidence>
<evidence type="ECO:0007744" key="36">
    <source>
        <dbReference type="PDB" id="2ZZ0"/>
    </source>
</evidence>
<evidence type="ECO:0007744" key="37">
    <source>
        <dbReference type="PDB" id="2ZZB"/>
    </source>
</evidence>
<evidence type="ECO:0007744" key="38">
    <source>
        <dbReference type="PDB" id="3QFA"/>
    </source>
</evidence>
<evidence type="ECO:0007744" key="39">
    <source>
    </source>
</evidence>
<evidence type="ECO:0007744" key="40">
    <source>
    </source>
</evidence>
<evidence type="ECO:0007744" key="41">
    <source>
    </source>
</evidence>
<evidence type="ECO:0007829" key="42">
    <source>
        <dbReference type="PDB" id="2J3N"/>
    </source>
</evidence>
<evidence type="ECO:0007829" key="43">
    <source>
        <dbReference type="PDB" id="2ZZ0"/>
    </source>
</evidence>
<evidence type="ECO:0007829" key="44">
    <source>
        <dbReference type="PDB" id="3QFA"/>
    </source>
</evidence>
<accession>Q16881</accession>
<accession>B7Z1F4</accession>
<accession>B7Z3Y8</accession>
<accession>B7Z904</accession>
<accession>E9PMY9</accession>
<accession>F5H780</accession>
<accession>Q6FI31</accession>
<accession>Q6VB40</accession>
<accession>Q6VB41</accession>
<accession>Q6VB42</accession>
<accession>Q6VBP2</accession>
<accession>Q6VBP3</accession>
<accession>Q6VBP4</accession>
<accession>Q6VBP5</accession>
<accession>Q6VBP9</accession>
<accession>Q6VBQ0</accession>
<accession>Q6YNQ1</accession>
<accession>Q76P53</accession>
<accession>Q7LA96</accession>
<accession>Q8WVC8</accession>
<accession>Q99475</accession>
<accession>Q9UES8</accession>
<accession>Q9UH79</accession>